<comment type="function">
    <text evidence="5">Functions in the regulation of endosome morphology and late endosome formation. Has a role in controlling trafficking from early to late endosomes and from late endosomes to lysosomes. Important for localization of Gdi to the endosomal membranes. May function in controlling the activity of multiple regulators in the endocytic pathway, perhaps by positively controlling those involved in the early steps of endocytosis such as Rab5 and hrs, and negative regulating those involved in the late stages of endocytosis like car and VhaSFD.</text>
</comment>
<comment type="subunit">
    <text evidence="5">Interacts with Gdi (Rab GDP dissociation inhibitor).</text>
</comment>
<comment type="subcellular location">
    <subcellularLocation>
        <location evidence="5">Apical cell membrane</location>
    </subcellularLocation>
    <subcellularLocation>
        <location evidence="5">Endosome membrane</location>
    </subcellularLocation>
    <subcellularLocation>
        <location evidence="5">Cytoplasm</location>
        <location evidence="5">Cell cortex</location>
    </subcellularLocation>
</comment>
<comment type="tissue specificity">
    <text evidence="5">In ovaries, expressed both in the germ line cells and in the overlying somatic follicular epithelium.</text>
</comment>
<comment type="domain">
    <text evidence="5">The FYVE-type zinc finger domain is necessary and sufficient for endosome targeting and localization to the plasma membrane.</text>
</comment>
<comment type="disruption phenotype">
    <text evidence="5">No visible phenotype. No effect on the subcellular localization or expression of Rab7, Rab11 and Avl.</text>
</comment>
<comment type="miscellaneous">
    <text evidence="6">The name 'rush hour' derives from the overexpression phenotype which displays a disruption to endosomal trafficking and cargo progression.</text>
</comment>
<organism evidence="13">
    <name type="scientific">Drosophila melanogaster</name>
    <name type="common">Fruit fly</name>
    <dbReference type="NCBI Taxonomy" id="7227"/>
    <lineage>
        <taxon>Eukaryota</taxon>
        <taxon>Metazoa</taxon>
        <taxon>Ecdysozoa</taxon>
        <taxon>Arthropoda</taxon>
        <taxon>Hexapoda</taxon>
        <taxon>Insecta</taxon>
        <taxon>Pterygota</taxon>
        <taxon>Neoptera</taxon>
        <taxon>Endopterygota</taxon>
        <taxon>Diptera</taxon>
        <taxon>Brachycera</taxon>
        <taxon>Muscomorpha</taxon>
        <taxon>Ephydroidea</taxon>
        <taxon>Drosophilidae</taxon>
        <taxon>Drosophila</taxon>
        <taxon>Sophophora</taxon>
    </lineage>
</organism>
<proteinExistence type="evidence at protein level"/>
<dbReference type="EMBL" id="AL031027">
    <property type="protein sequence ID" value="CAA19842.1"/>
    <property type="molecule type" value="Genomic_DNA"/>
</dbReference>
<dbReference type="EMBL" id="AE014298">
    <property type="protein sequence ID" value="AAF45637.1"/>
    <property type="molecule type" value="Genomic_DNA"/>
</dbReference>
<dbReference type="EMBL" id="AE014298">
    <property type="protein sequence ID" value="AHN59255.1"/>
    <property type="molecule type" value="Genomic_DNA"/>
</dbReference>
<dbReference type="EMBL" id="BT003610">
    <property type="protein sequence ID" value="AAO39613.1"/>
    <property type="molecule type" value="mRNA"/>
</dbReference>
<dbReference type="EMBL" id="BT056254">
    <property type="protein sequence ID" value="ACL68701.1"/>
    <property type="molecule type" value="mRNA"/>
</dbReference>
<dbReference type="EMBL" id="AY061277">
    <property type="protein sequence ID" value="AAL28825.1"/>
    <property type="molecule type" value="mRNA"/>
</dbReference>
<dbReference type="PIR" id="T13601">
    <property type="entry name" value="T13601"/>
</dbReference>
<dbReference type="RefSeq" id="NP_001284784.1">
    <property type="nucleotide sequence ID" value="NM_001297855.1"/>
</dbReference>
<dbReference type="RefSeq" id="NP_569923.2">
    <property type="nucleotide sequence ID" value="NM_130567.3"/>
</dbReference>
<dbReference type="SMR" id="O76902"/>
<dbReference type="DIP" id="DIP-21949N"/>
<dbReference type="FunCoup" id="O76902">
    <property type="interactions" value="823"/>
</dbReference>
<dbReference type="IntAct" id="O76902">
    <property type="interactions" value="2"/>
</dbReference>
<dbReference type="STRING" id="7227.FBpp0308661"/>
<dbReference type="GlyGen" id="O76902">
    <property type="glycosylation" value="1 site"/>
</dbReference>
<dbReference type="PaxDb" id="7227-FBpp0070249"/>
<dbReference type="DNASU" id="31105"/>
<dbReference type="EnsemblMetazoa" id="FBtr0070259">
    <property type="protein sequence ID" value="FBpp0070249"/>
    <property type="gene ID" value="FBgn0025381"/>
</dbReference>
<dbReference type="EnsemblMetazoa" id="FBtr0339589">
    <property type="protein sequence ID" value="FBpp0308661"/>
    <property type="gene ID" value="FBgn0025381"/>
</dbReference>
<dbReference type="GeneID" id="31105"/>
<dbReference type="KEGG" id="dme:Dmel_CG14782"/>
<dbReference type="UCSC" id="CG14782-RA">
    <property type="organism name" value="d. melanogaster"/>
</dbReference>
<dbReference type="AGR" id="FB:FBgn0025381"/>
<dbReference type="CTD" id="31105"/>
<dbReference type="FlyBase" id="FBgn0025381">
    <property type="gene designation" value="rush"/>
</dbReference>
<dbReference type="VEuPathDB" id="VectorBase:FBgn0025381"/>
<dbReference type="eggNOG" id="KOG1729">
    <property type="taxonomic scope" value="Eukaryota"/>
</dbReference>
<dbReference type="GeneTree" id="ENSGT00940000156408"/>
<dbReference type="HOGENOM" id="CLU_064864_1_0_1"/>
<dbReference type="InParanoid" id="O76902"/>
<dbReference type="OMA" id="PVRVCEH"/>
<dbReference type="OrthoDB" id="70570at2759"/>
<dbReference type="PhylomeDB" id="O76902"/>
<dbReference type="BioGRID-ORCS" id="31105">
    <property type="hits" value="2 hits in 3 CRISPR screens"/>
</dbReference>
<dbReference type="GenomeRNAi" id="31105"/>
<dbReference type="PRO" id="PR:O76902"/>
<dbReference type="Proteomes" id="UP000000803">
    <property type="component" value="Chromosome X"/>
</dbReference>
<dbReference type="Bgee" id="FBgn0025381">
    <property type="expression patterns" value="Expressed in visual pigment cell (sensu Nematoda and Protostomia) in testis and 98 other cell types or tissues"/>
</dbReference>
<dbReference type="GO" id="GO:0016324">
    <property type="term" value="C:apical plasma membrane"/>
    <property type="evidence" value="ECO:0007669"/>
    <property type="project" value="UniProtKB-SubCell"/>
</dbReference>
<dbReference type="GO" id="GO:0005938">
    <property type="term" value="C:cell cortex"/>
    <property type="evidence" value="ECO:0007669"/>
    <property type="project" value="UniProtKB-SubCell"/>
</dbReference>
<dbReference type="GO" id="GO:0005769">
    <property type="term" value="C:early endosome"/>
    <property type="evidence" value="ECO:0000314"/>
    <property type="project" value="FlyBase"/>
</dbReference>
<dbReference type="GO" id="GO:0010008">
    <property type="term" value="C:endosome membrane"/>
    <property type="evidence" value="ECO:0007669"/>
    <property type="project" value="UniProtKB-SubCell"/>
</dbReference>
<dbReference type="GO" id="GO:0005770">
    <property type="term" value="C:late endosome"/>
    <property type="evidence" value="ECO:0000314"/>
    <property type="project" value="FlyBase"/>
</dbReference>
<dbReference type="GO" id="GO:0035091">
    <property type="term" value="F:phosphatidylinositol binding"/>
    <property type="evidence" value="ECO:0000314"/>
    <property type="project" value="FlyBase"/>
</dbReference>
<dbReference type="GO" id="GO:0008270">
    <property type="term" value="F:zinc ion binding"/>
    <property type="evidence" value="ECO:0007669"/>
    <property type="project" value="UniProtKB-KW"/>
</dbReference>
<dbReference type="GO" id="GO:0006897">
    <property type="term" value="P:endocytosis"/>
    <property type="evidence" value="ECO:0000316"/>
    <property type="project" value="FlyBase"/>
</dbReference>
<dbReference type="GO" id="GO:0007032">
    <property type="term" value="P:endosome organization"/>
    <property type="evidence" value="ECO:0000315"/>
    <property type="project" value="FlyBase"/>
</dbReference>
<dbReference type="GO" id="GO:0008333">
    <property type="term" value="P:endosome to lysosome transport"/>
    <property type="evidence" value="ECO:0000315"/>
    <property type="project" value="FlyBase"/>
</dbReference>
<dbReference type="CDD" id="cd15717">
    <property type="entry name" value="FYVE_PKHF"/>
    <property type="match status" value="1"/>
</dbReference>
<dbReference type="CDD" id="cd01218">
    <property type="entry name" value="PH_Phafin2-like"/>
    <property type="match status" value="1"/>
</dbReference>
<dbReference type="FunFam" id="2.30.29.30:FF:000167">
    <property type="entry name" value="Pleckstrin homology domain-containing family F member 2"/>
    <property type="match status" value="1"/>
</dbReference>
<dbReference type="Gene3D" id="2.30.29.30">
    <property type="entry name" value="Pleckstrin-homology domain (PH domain)/Phosphotyrosine-binding domain (PTB)"/>
    <property type="match status" value="1"/>
</dbReference>
<dbReference type="Gene3D" id="3.30.40.10">
    <property type="entry name" value="Zinc/RING finger domain, C3HC4 (zinc finger)"/>
    <property type="match status" value="1"/>
</dbReference>
<dbReference type="InterPro" id="IPR011993">
    <property type="entry name" value="PH-like_dom_sf"/>
</dbReference>
<dbReference type="InterPro" id="IPR001849">
    <property type="entry name" value="PH_domain"/>
</dbReference>
<dbReference type="InterPro" id="IPR051765">
    <property type="entry name" value="PH_domain-containing_F"/>
</dbReference>
<dbReference type="InterPro" id="IPR037871">
    <property type="entry name" value="PH_Phafin"/>
</dbReference>
<dbReference type="InterPro" id="IPR055251">
    <property type="entry name" value="SOS1_NGEF_PH"/>
</dbReference>
<dbReference type="InterPro" id="IPR000306">
    <property type="entry name" value="Znf_FYVE"/>
</dbReference>
<dbReference type="InterPro" id="IPR017455">
    <property type="entry name" value="Znf_FYVE-rel"/>
</dbReference>
<dbReference type="InterPro" id="IPR011011">
    <property type="entry name" value="Znf_FYVE_PHD"/>
</dbReference>
<dbReference type="InterPro" id="IPR013083">
    <property type="entry name" value="Znf_RING/FYVE/PHD"/>
</dbReference>
<dbReference type="PANTHER" id="PTHR46280:SF3">
    <property type="entry name" value="PLECKSTRIN HOMOLOGY DOMAIN-CONTAINING FAMILY F MEMBER 1 HOMOLOG"/>
    <property type="match status" value="1"/>
</dbReference>
<dbReference type="PANTHER" id="PTHR46280">
    <property type="entry name" value="PLECKSTRIN HOMOLOGY DOMAIN-CONTAINING FAMILY F MEMBER 2-RELATED"/>
    <property type="match status" value="1"/>
</dbReference>
<dbReference type="Pfam" id="PF01363">
    <property type="entry name" value="FYVE"/>
    <property type="match status" value="1"/>
</dbReference>
<dbReference type="Pfam" id="PF22697">
    <property type="entry name" value="SOS1_NGEF_PH"/>
    <property type="match status" value="1"/>
</dbReference>
<dbReference type="SMART" id="SM00064">
    <property type="entry name" value="FYVE"/>
    <property type="match status" value="1"/>
</dbReference>
<dbReference type="SMART" id="SM00233">
    <property type="entry name" value="PH"/>
    <property type="match status" value="1"/>
</dbReference>
<dbReference type="SUPFAM" id="SSF57903">
    <property type="entry name" value="FYVE/PHD zinc finger"/>
    <property type="match status" value="1"/>
</dbReference>
<dbReference type="SUPFAM" id="SSF50729">
    <property type="entry name" value="PH domain-like"/>
    <property type="match status" value="1"/>
</dbReference>
<dbReference type="PROSITE" id="PS50003">
    <property type="entry name" value="PH_DOMAIN"/>
    <property type="match status" value="1"/>
</dbReference>
<dbReference type="PROSITE" id="PS50178">
    <property type="entry name" value="ZF_FYVE"/>
    <property type="match status" value="1"/>
</dbReference>
<protein>
    <recommendedName>
        <fullName evidence="1">Pleckstrin homology domain-containing family F member 1 homolog</fullName>
        <shortName evidence="1">PH domain-containing family F member 1 homolog</shortName>
    </recommendedName>
    <alternativeName>
        <fullName evidence="6">Protein rush hour</fullName>
    </alternativeName>
</protein>
<keyword id="KW-1003">Cell membrane</keyword>
<keyword id="KW-0963">Cytoplasm</keyword>
<keyword id="KW-0254">Endocytosis</keyword>
<keyword id="KW-0967">Endosome</keyword>
<keyword id="KW-0472">Membrane</keyword>
<keyword id="KW-0479">Metal-binding</keyword>
<keyword id="KW-1185">Reference proteome</keyword>
<keyword id="KW-0862">Zinc</keyword>
<keyword id="KW-0863">Zinc-finger</keyword>
<sequence>MVDRLVNSEANTRRIASVENCFGSSGVPLAMQGRVLVGEGVLTKMCRKRPKSRQFFLFNDILVYGNIVIGKKKYNKQHIMPLEEVSLESIADNQTYRNGWYIRTTTKSFVVFAATSTEKQEWMAHINKCVEDLLRKSGKKPVENHAAVWVPDTDASVCMHCKKTQFTFIQRRHHCRNCGAVVCAGCSAKKFLLPQQSTKALRVCDACYERLKHVPSSLGSGEDSAAATGAASGNKLNTTAGDSSNDEDSDEETASPGGESHDEPRFYGDNSVLSAVEDSSTITSPSSATTGSLEAPQVTPSVQSSPAAVATTGSHC</sequence>
<accession>O76902</accession>
<accession>Q95RM3</accession>
<gene>
    <name evidence="12" type="primary">rush</name>
    <name evidence="12" type="synonym">EG:80H7.5</name>
    <name evidence="12" type="ORF">CG14782</name>
</gene>
<evidence type="ECO:0000250" key="1">
    <source>
        <dbReference type="UniProtKB" id="Q96S99"/>
    </source>
</evidence>
<evidence type="ECO:0000255" key="2">
    <source>
        <dbReference type="PROSITE-ProRule" id="PRU00091"/>
    </source>
</evidence>
<evidence type="ECO:0000255" key="3">
    <source>
        <dbReference type="PROSITE-ProRule" id="PRU00145"/>
    </source>
</evidence>
<evidence type="ECO:0000256" key="4">
    <source>
        <dbReference type="SAM" id="MobiDB-lite"/>
    </source>
</evidence>
<evidence type="ECO:0000269" key="5">
    <source>
    </source>
</evidence>
<evidence type="ECO:0000303" key="6">
    <source>
    </source>
</evidence>
<evidence type="ECO:0000305" key="7"/>
<evidence type="ECO:0000312" key="8">
    <source>
        <dbReference type="EMBL" id="AAL28825.1"/>
    </source>
</evidence>
<evidence type="ECO:0000312" key="9">
    <source>
        <dbReference type="EMBL" id="AAO39613.1"/>
    </source>
</evidence>
<evidence type="ECO:0000312" key="10">
    <source>
        <dbReference type="EMBL" id="ACL68701.1"/>
    </source>
</evidence>
<evidence type="ECO:0000312" key="11">
    <source>
        <dbReference type="EMBL" id="CAA19842.1"/>
    </source>
</evidence>
<evidence type="ECO:0000312" key="12">
    <source>
        <dbReference type="FlyBase" id="FBgn0025381"/>
    </source>
</evidence>
<evidence type="ECO:0000312" key="13">
    <source>
        <dbReference type="Proteomes" id="UP000000803"/>
    </source>
</evidence>
<feature type="chain" id="PRO_0000438292" description="Pleckstrin homology domain-containing family F member 1 homolog">
    <location>
        <begin position="1"/>
        <end position="316"/>
    </location>
</feature>
<feature type="domain" description="PH" evidence="3">
    <location>
        <begin position="35"/>
        <end position="131"/>
    </location>
</feature>
<feature type="zinc finger region" description="FYVE-type" evidence="2">
    <location>
        <begin position="152"/>
        <end position="212"/>
    </location>
</feature>
<feature type="region of interest" description="Disordered" evidence="4">
    <location>
        <begin position="215"/>
        <end position="316"/>
    </location>
</feature>
<feature type="compositionally biased region" description="Acidic residues" evidence="4">
    <location>
        <begin position="244"/>
        <end position="253"/>
    </location>
</feature>
<feature type="compositionally biased region" description="Low complexity" evidence="4">
    <location>
        <begin position="279"/>
        <end position="292"/>
    </location>
</feature>
<feature type="compositionally biased region" description="Polar residues" evidence="4">
    <location>
        <begin position="298"/>
        <end position="316"/>
    </location>
</feature>
<feature type="binding site" evidence="2">
    <location>
        <position position="158"/>
    </location>
    <ligand>
        <name>Zn(2+)</name>
        <dbReference type="ChEBI" id="CHEBI:29105"/>
        <label>1</label>
    </ligand>
</feature>
<feature type="binding site" evidence="2">
    <location>
        <position position="161"/>
    </location>
    <ligand>
        <name>Zn(2+)</name>
        <dbReference type="ChEBI" id="CHEBI:29105"/>
        <label>1</label>
    </ligand>
</feature>
<feature type="binding site" evidence="2">
    <location>
        <position position="175"/>
    </location>
    <ligand>
        <name>Zn(2+)</name>
        <dbReference type="ChEBI" id="CHEBI:29105"/>
        <label>2</label>
    </ligand>
</feature>
<feature type="binding site" evidence="2">
    <location>
        <position position="178"/>
    </location>
    <ligand>
        <name>Zn(2+)</name>
        <dbReference type="ChEBI" id="CHEBI:29105"/>
        <label>2</label>
    </ligand>
</feature>
<feature type="binding site" evidence="2">
    <location>
        <position position="183"/>
    </location>
    <ligand>
        <name>Zn(2+)</name>
        <dbReference type="ChEBI" id="CHEBI:29105"/>
        <label>1</label>
    </ligand>
</feature>
<feature type="binding site" evidence="2">
    <location>
        <position position="186"/>
    </location>
    <ligand>
        <name>Zn(2+)</name>
        <dbReference type="ChEBI" id="CHEBI:29105"/>
        <label>1</label>
    </ligand>
</feature>
<feature type="binding site" evidence="2">
    <location>
        <position position="204"/>
    </location>
    <ligand>
        <name>Zn(2+)</name>
        <dbReference type="ChEBI" id="CHEBI:29105"/>
        <label>2</label>
    </ligand>
</feature>
<feature type="binding site" evidence="2">
    <location>
        <position position="207"/>
    </location>
    <ligand>
        <name>Zn(2+)</name>
        <dbReference type="ChEBI" id="CHEBI:29105"/>
        <label>2</label>
    </ligand>
</feature>
<feature type="mutagenesis site" description="Increase in late endosome size. Loss of binding to various phosphoinositides, but no loss of binding to phosphatidylinositol 3-phosphate (PtdIns3P). Localization to the cell cortex and endosomes is not affected." evidence="5">
    <original>K</original>
    <variation>E</variation>
    <location>
        <position position="48"/>
    </location>
</feature>
<feature type="mutagenesis site" description="No localization to the endosomes. Present at the plasma membrane and in the cytosol. Loss of binding to PtdIns3P." evidence="5">
    <original>R</original>
    <variation>G</variation>
    <location>
        <position position="176"/>
    </location>
</feature>
<feature type="sequence conflict" description="In Ref. 5; AAL28825." evidence="7" ref="5">
    <original>ALRVC</original>
    <variation>GVARL</variation>
    <location>
        <begin position="200"/>
        <end position="204"/>
    </location>
</feature>
<reference evidence="11" key="1">
    <citation type="journal article" date="2001" name="Genome Res.">
        <title>From first base: the sequence of the tip of the X chromosome of Drosophila melanogaster, a comparison of two sequencing strategies.</title>
        <authorList>
            <person name="Benos P.V."/>
            <person name="Gatt M.K."/>
            <person name="Murphy L."/>
            <person name="Harris D."/>
            <person name="Barrell B."/>
            <person name="Ferraz C."/>
            <person name="Vidal S."/>
            <person name="Brun C."/>
            <person name="Demaille J."/>
            <person name="Cadieu E."/>
            <person name="Dreano S."/>
            <person name="Gloux S."/>
            <person name="Lelaure V."/>
            <person name="Mottier S."/>
            <person name="Galibert F."/>
            <person name="Borkova D."/>
            <person name="Minana B."/>
            <person name="Kafatos F.C."/>
            <person name="Bolshakov S."/>
            <person name="Siden-Kiamos I."/>
            <person name="Papagiannakis G."/>
            <person name="Spanos L."/>
            <person name="Louis C."/>
            <person name="Madueno E."/>
            <person name="de Pablos B."/>
            <person name="Modolell J."/>
            <person name="Peter A."/>
            <person name="Schoettler P."/>
            <person name="Werner M."/>
            <person name="Mourkioti F."/>
            <person name="Beinert N."/>
            <person name="Dowe G."/>
            <person name="Schaefer U."/>
            <person name="Jaeckle H."/>
            <person name="Bucheton A."/>
            <person name="Callister D."/>
            <person name="Campbell L."/>
            <person name="Henderson N.S."/>
            <person name="McMillan P.J."/>
            <person name="Salles C."/>
            <person name="Tait E."/>
            <person name="Valenti P."/>
            <person name="Saunders R.D."/>
            <person name="Billaud A."/>
            <person name="Pachter L."/>
            <person name="Glover D.M."/>
            <person name="Ashburner M."/>
        </authorList>
    </citation>
    <scope>NUCLEOTIDE SEQUENCE [LARGE SCALE MRNA]</scope>
</reference>
<reference evidence="13" key="2">
    <citation type="journal article" date="2000" name="Science">
        <title>The genome sequence of Drosophila melanogaster.</title>
        <authorList>
            <person name="Adams M.D."/>
            <person name="Celniker S.E."/>
            <person name="Holt R.A."/>
            <person name="Evans C.A."/>
            <person name="Gocayne J.D."/>
            <person name="Amanatides P.G."/>
            <person name="Scherer S.E."/>
            <person name="Li P.W."/>
            <person name="Hoskins R.A."/>
            <person name="Galle R.F."/>
            <person name="George R.A."/>
            <person name="Lewis S.E."/>
            <person name="Richards S."/>
            <person name="Ashburner M."/>
            <person name="Henderson S.N."/>
            <person name="Sutton G.G."/>
            <person name="Wortman J.R."/>
            <person name="Yandell M.D."/>
            <person name="Zhang Q."/>
            <person name="Chen L.X."/>
            <person name="Brandon R.C."/>
            <person name="Rogers Y.-H.C."/>
            <person name="Blazej R.G."/>
            <person name="Champe M."/>
            <person name="Pfeiffer B.D."/>
            <person name="Wan K.H."/>
            <person name="Doyle C."/>
            <person name="Baxter E.G."/>
            <person name="Helt G."/>
            <person name="Nelson C.R."/>
            <person name="Miklos G.L.G."/>
            <person name="Abril J.F."/>
            <person name="Agbayani A."/>
            <person name="An H.-J."/>
            <person name="Andrews-Pfannkoch C."/>
            <person name="Baldwin D."/>
            <person name="Ballew R.M."/>
            <person name="Basu A."/>
            <person name="Baxendale J."/>
            <person name="Bayraktaroglu L."/>
            <person name="Beasley E.M."/>
            <person name="Beeson K.Y."/>
            <person name="Benos P.V."/>
            <person name="Berman B.P."/>
            <person name="Bhandari D."/>
            <person name="Bolshakov S."/>
            <person name="Borkova D."/>
            <person name="Botchan M.R."/>
            <person name="Bouck J."/>
            <person name="Brokstein P."/>
            <person name="Brottier P."/>
            <person name="Burtis K.C."/>
            <person name="Busam D.A."/>
            <person name="Butler H."/>
            <person name="Cadieu E."/>
            <person name="Center A."/>
            <person name="Chandra I."/>
            <person name="Cherry J.M."/>
            <person name="Cawley S."/>
            <person name="Dahlke C."/>
            <person name="Davenport L.B."/>
            <person name="Davies P."/>
            <person name="de Pablos B."/>
            <person name="Delcher A."/>
            <person name="Deng Z."/>
            <person name="Mays A.D."/>
            <person name="Dew I."/>
            <person name="Dietz S.M."/>
            <person name="Dodson K."/>
            <person name="Doup L.E."/>
            <person name="Downes M."/>
            <person name="Dugan-Rocha S."/>
            <person name="Dunkov B.C."/>
            <person name="Dunn P."/>
            <person name="Durbin K.J."/>
            <person name="Evangelista C.C."/>
            <person name="Ferraz C."/>
            <person name="Ferriera S."/>
            <person name="Fleischmann W."/>
            <person name="Fosler C."/>
            <person name="Gabrielian A.E."/>
            <person name="Garg N.S."/>
            <person name="Gelbart W.M."/>
            <person name="Glasser K."/>
            <person name="Glodek A."/>
            <person name="Gong F."/>
            <person name="Gorrell J.H."/>
            <person name="Gu Z."/>
            <person name="Guan P."/>
            <person name="Harris M."/>
            <person name="Harris N.L."/>
            <person name="Harvey D.A."/>
            <person name="Heiman T.J."/>
            <person name="Hernandez J.R."/>
            <person name="Houck J."/>
            <person name="Hostin D."/>
            <person name="Houston K.A."/>
            <person name="Howland T.J."/>
            <person name="Wei M.-H."/>
            <person name="Ibegwam C."/>
            <person name="Jalali M."/>
            <person name="Kalush F."/>
            <person name="Karpen G.H."/>
            <person name="Ke Z."/>
            <person name="Kennison J.A."/>
            <person name="Ketchum K.A."/>
            <person name="Kimmel B.E."/>
            <person name="Kodira C.D."/>
            <person name="Kraft C.L."/>
            <person name="Kravitz S."/>
            <person name="Kulp D."/>
            <person name="Lai Z."/>
            <person name="Lasko P."/>
            <person name="Lei Y."/>
            <person name="Levitsky A.A."/>
            <person name="Li J.H."/>
            <person name="Li Z."/>
            <person name="Liang Y."/>
            <person name="Lin X."/>
            <person name="Liu X."/>
            <person name="Mattei B."/>
            <person name="McIntosh T.C."/>
            <person name="McLeod M.P."/>
            <person name="McPherson D."/>
            <person name="Merkulov G."/>
            <person name="Milshina N.V."/>
            <person name="Mobarry C."/>
            <person name="Morris J."/>
            <person name="Moshrefi A."/>
            <person name="Mount S.M."/>
            <person name="Moy M."/>
            <person name="Murphy B."/>
            <person name="Murphy L."/>
            <person name="Muzny D.M."/>
            <person name="Nelson D.L."/>
            <person name="Nelson D.R."/>
            <person name="Nelson K.A."/>
            <person name="Nixon K."/>
            <person name="Nusskern D.R."/>
            <person name="Pacleb J.M."/>
            <person name="Palazzolo M."/>
            <person name="Pittman G.S."/>
            <person name="Pan S."/>
            <person name="Pollard J."/>
            <person name="Puri V."/>
            <person name="Reese M.G."/>
            <person name="Reinert K."/>
            <person name="Remington K."/>
            <person name="Saunders R.D.C."/>
            <person name="Scheeler F."/>
            <person name="Shen H."/>
            <person name="Shue B.C."/>
            <person name="Siden-Kiamos I."/>
            <person name="Simpson M."/>
            <person name="Skupski M.P."/>
            <person name="Smith T.J."/>
            <person name="Spier E."/>
            <person name="Spradling A.C."/>
            <person name="Stapleton M."/>
            <person name="Strong R."/>
            <person name="Sun E."/>
            <person name="Svirskas R."/>
            <person name="Tector C."/>
            <person name="Turner R."/>
            <person name="Venter E."/>
            <person name="Wang A.H."/>
            <person name="Wang X."/>
            <person name="Wang Z.-Y."/>
            <person name="Wassarman D.A."/>
            <person name="Weinstock G.M."/>
            <person name="Weissenbach J."/>
            <person name="Williams S.M."/>
            <person name="Woodage T."/>
            <person name="Worley K.C."/>
            <person name="Wu D."/>
            <person name="Yang S."/>
            <person name="Yao Q.A."/>
            <person name="Ye J."/>
            <person name="Yeh R.-F."/>
            <person name="Zaveri J.S."/>
            <person name="Zhan M."/>
            <person name="Zhang G."/>
            <person name="Zhao Q."/>
            <person name="Zheng L."/>
            <person name="Zheng X.H."/>
            <person name="Zhong F.N."/>
            <person name="Zhong W."/>
            <person name="Zhou X."/>
            <person name="Zhu S.C."/>
            <person name="Zhu X."/>
            <person name="Smith H.O."/>
            <person name="Gibbs R.A."/>
            <person name="Myers E.W."/>
            <person name="Rubin G.M."/>
            <person name="Venter J.C."/>
        </authorList>
    </citation>
    <scope>NUCLEOTIDE SEQUENCE [LARGE SCALE GENOMIC DNA]</scope>
    <source>
        <strain>Berkeley</strain>
    </source>
</reference>
<reference evidence="13" key="3">
    <citation type="journal article" date="2002" name="Genome Biol.">
        <title>Annotation of the Drosophila melanogaster euchromatic genome: a systematic review.</title>
        <authorList>
            <person name="Misra S."/>
            <person name="Crosby M.A."/>
            <person name="Mungall C.J."/>
            <person name="Matthews B.B."/>
            <person name="Campbell K.S."/>
            <person name="Hradecky P."/>
            <person name="Huang Y."/>
            <person name="Kaminker J.S."/>
            <person name="Millburn G.H."/>
            <person name="Prochnik S.E."/>
            <person name="Smith C.D."/>
            <person name="Tupy J.L."/>
            <person name="Whitfield E.J."/>
            <person name="Bayraktaroglu L."/>
            <person name="Berman B.P."/>
            <person name="Bettencourt B.R."/>
            <person name="Celniker S.E."/>
            <person name="de Grey A.D.N.J."/>
            <person name="Drysdale R.A."/>
            <person name="Harris N.L."/>
            <person name="Richter J."/>
            <person name="Russo S."/>
            <person name="Schroeder A.J."/>
            <person name="Shu S.Q."/>
            <person name="Stapleton M."/>
            <person name="Yamada C."/>
            <person name="Ashburner M."/>
            <person name="Gelbart W.M."/>
            <person name="Rubin G.M."/>
            <person name="Lewis S.E."/>
        </authorList>
    </citation>
    <scope>GENOME REANNOTATION</scope>
    <source>
        <strain>Berkeley</strain>
    </source>
</reference>
<reference evidence="9 10" key="4">
    <citation type="submission" date="2009-01" db="EMBL/GenBank/DDBJ databases">
        <authorList>
            <person name="Stapleton M."/>
            <person name="Booth B."/>
            <person name="Brokstein P."/>
            <person name="Hong L."/>
            <person name="Agbayani A."/>
            <person name="Carlson J."/>
            <person name="Champe M."/>
            <person name="Chavez C."/>
            <person name="Dorsett V."/>
            <person name="Dresnek D."/>
            <person name="Farfan D."/>
            <person name="Frise E."/>
            <person name="George R."/>
            <person name="Gonzalez M."/>
            <person name="Guarin H."/>
            <person name="Kronmiller B."/>
            <person name="Li P."/>
            <person name="Liao G."/>
            <person name="Miranda A."/>
            <person name="Mungall C.J."/>
            <person name="Nunoo J."/>
            <person name="Pacleb J."/>
            <person name="Paragas V."/>
            <person name="Park S."/>
            <person name="Patel S."/>
            <person name="Phouanenavong S."/>
            <person name="Wan K."/>
            <person name="Yu C."/>
            <person name="Lewis S.E."/>
            <person name="Rubin G.M."/>
            <person name="Celniker S."/>
        </authorList>
    </citation>
    <scope>NUCLEOTIDE SEQUENCE [LARGE SCALE MRNA]</scope>
    <source>
        <strain evidence="9 10">Berkeley</strain>
        <tissue evidence="9">Head</tissue>
    </source>
</reference>
<reference evidence="8" key="5">
    <citation type="journal article" date="2002" name="Genome Biol.">
        <title>A Drosophila full-length cDNA resource.</title>
        <authorList>
            <person name="Stapleton M."/>
            <person name="Carlson J.W."/>
            <person name="Brokstein P."/>
            <person name="Yu C."/>
            <person name="Champe M."/>
            <person name="George R.A."/>
            <person name="Guarin H."/>
            <person name="Kronmiller B."/>
            <person name="Pacleb J.M."/>
            <person name="Park S."/>
            <person name="Wan K.H."/>
            <person name="Rubin G.M."/>
            <person name="Celniker S.E."/>
        </authorList>
    </citation>
    <scope>NUCLEOTIDE SEQUENCE [LARGE SCALE MRNA] OF 1-204</scope>
    <source>
        <strain>Berkeley</strain>
        <tissue>Embryo</tissue>
    </source>
</reference>
<reference evidence="7" key="6">
    <citation type="journal article" date="2012" name="Mol. Biol. Cell">
        <title>The phosphoinositide-associated protein Rush hour regulates endosomal trafficking in Drosophila.</title>
        <authorList>
            <person name="Gailite I."/>
            <person name="Egger-Adam D."/>
            <person name="Wodarz A."/>
        </authorList>
    </citation>
    <scope>FUNCTION</scope>
    <scope>SUBUNIT</scope>
    <scope>SUBCELLULAR LOCATION</scope>
    <scope>TISSUE SPECIFICITY</scope>
    <scope>DOMAIN</scope>
    <scope>DISRUPTION PHENOTYPE</scope>
    <scope>MUTAGENESIS OF LYS-48 AND ARG-176</scope>
</reference>
<name>PKHF1_DROME</name>